<proteinExistence type="evidence at protein level"/>
<sequence>MASILHYFLALSLSFSFLFFLSDSVPIPQHHTNPTKPINLLVLPVQNDASTGLHWANLQKRTPLMQVPVLVDLNGNHLWVNCEQHYSSKTYQAPFCHSTQCSRANTHQCLSCPAASRPGCHKNTCGLMSTNPITQQTGLGELGQDVLAIHATQGSTQQLGPLVTVPQFLFSCAPSFLLQKGLPRNIQGVAGLGHAPISLPNQLASHFGLQHQFTTCLSRYPTSKGALIFGDAPNNMQQFHNQDIFHDLAFTPLTVTPQGEYNVRVSSIRINQHSVFPPNKISSTIVGSSGGTMISTSTPHMVLQQSLYQAFTQVFAQQLEKQAQVKSVAPFGLCFNSNKINAYPSVDLVMDKPNGPVWRISGEDLMVQAQPGVTCLGVMNGGMQPRAEVTLGTRQLEEKLMVFDLARSRVGFSTSSLHSHGVKCGDLFNFANA</sequence>
<keyword id="KW-0903">Direct protein sequencing</keyword>
<keyword id="KW-1015">Disulfide bond</keyword>
<keyword id="KW-1185">Reference proteome</keyword>
<keyword id="KW-0708">Seed storage protein</keyword>
<keyword id="KW-0732">Signal</keyword>
<keyword id="KW-0758">Storage protein</keyword>
<comment type="function">
    <text evidence="1">Seed storage protein. Has a protein kinase activity. Binds leginsulin (By similarity).</text>
</comment>
<comment type="subunit">
    <text>The mature protein consists of high- and low-kDa subunits linked by disulfide bonds.</text>
</comment>
<comment type="similarity">
    <text evidence="2">Belongs to the peptidase A1 family.</text>
</comment>
<organism>
    <name type="scientific">Glycine max</name>
    <name type="common">Soybean</name>
    <name type="synonym">Glycine hispida</name>
    <dbReference type="NCBI Taxonomy" id="3847"/>
    <lineage>
        <taxon>Eukaryota</taxon>
        <taxon>Viridiplantae</taxon>
        <taxon>Streptophyta</taxon>
        <taxon>Embryophyta</taxon>
        <taxon>Tracheophyta</taxon>
        <taxon>Spermatophyta</taxon>
        <taxon>Magnoliopsida</taxon>
        <taxon>eudicotyledons</taxon>
        <taxon>Gunneridae</taxon>
        <taxon>Pentapetalae</taxon>
        <taxon>rosids</taxon>
        <taxon>fabids</taxon>
        <taxon>Fabales</taxon>
        <taxon>Fabaceae</taxon>
        <taxon>Papilionoideae</taxon>
        <taxon>50 kb inversion clade</taxon>
        <taxon>NPAAA clade</taxon>
        <taxon>indigoferoid/millettioid clade</taxon>
        <taxon>Phaseoleae</taxon>
        <taxon>Glycine</taxon>
        <taxon>Glycine subgen. Soja</taxon>
    </lineage>
</organism>
<protein>
    <recommendedName>
        <fullName>Basic 7S globulin 2</fullName>
    </recommendedName>
    <alternativeName>
        <fullName>SBg7S</fullName>
        <shortName>Bg</shortName>
    </alternativeName>
    <component>
        <recommendedName>
            <fullName>Basic 7S globulin 2 high kDa subunit</fullName>
        </recommendedName>
    </component>
    <component>
        <recommendedName>
            <fullName>Basic 7S globulin 2 low kDa subunit</fullName>
        </recommendedName>
    </component>
</protein>
<reference key="1">
    <citation type="submission" date="2002-04" db="EMBL/GenBank/DDBJ databases">
        <title>Sequence of a cDNA encoding soybean basic 7S globulin isoform.</title>
        <authorList>
            <person name="Ishizu Y."/>
            <person name="Sassa H."/>
            <person name="Hirano H."/>
        </authorList>
    </citation>
    <scope>NUCLEOTIDE SEQUENCE [MRNA]</scope>
    <source>
        <tissue>Seed</tissue>
    </source>
</reference>
<reference key="2">
    <citation type="journal article" date="1991" name="Bioorg. Khim.">
        <title>Isolation and characteristics of insulin-binding proteins from soybeans.</title>
        <authorList>
            <person name="Barbashov S.F."/>
            <person name="Egorov T.S.A."/>
            <person name="Kochkina V.M."/>
        </authorList>
    </citation>
    <scope>PROTEIN SEQUENCE OF 25-59 AND 283-311</scope>
</reference>
<feature type="signal peptide" evidence="3">
    <location>
        <begin position="1"/>
        <end position="24"/>
    </location>
</feature>
<feature type="chain" id="PRO_0000032201" description="Basic 7S globulin 2">
    <location>
        <begin position="25"/>
        <end position="433"/>
    </location>
</feature>
<feature type="chain" id="PRO_0000032202" description="Basic 7S globulin 2 high kDa subunit">
    <location>
        <begin position="25"/>
        <end position="282"/>
    </location>
</feature>
<feature type="chain" id="PRO_0000032203" description="Basic 7S globulin 2 low kDa subunit">
    <location>
        <begin position="283"/>
        <end position="433"/>
    </location>
</feature>
<feature type="domain" description="Peptidase A1" evidence="2">
    <location>
        <begin position="54"/>
        <end position="413"/>
    </location>
</feature>
<feature type="sequence conflict" description="In Ref. 2; AA sequence." evidence="4" ref="2">
    <original>H</original>
    <variation>K</variation>
    <location>
        <position position="31"/>
    </location>
</feature>
<feature type="sequence conflict" description="In Ref. 2; AA sequence." evidence="4" ref="2">
    <original>A</original>
    <variation>G</variation>
    <location>
        <position position="49"/>
    </location>
</feature>
<feature type="sequence conflict" description="In Ref. 2; AA sequence." evidence="4" ref="2">
    <original>N</original>
    <variation>A</variation>
    <location>
        <position position="57"/>
    </location>
</feature>
<feature type="sequence conflict" description="In Ref. 2; AA sequence." evidence="4" ref="2">
    <original>G</original>
    <variation>C</variation>
    <location>
        <position position="287"/>
    </location>
</feature>
<feature type="sequence conflict" description="In Ref. 2; AA sequence." evidence="4" ref="2">
    <original>GG</original>
    <variation>CC</variation>
    <location>
        <begin position="290"/>
        <end position="291"/>
    </location>
</feature>
<feature type="sequence conflict" description="In Ref. 2; AA sequence." evidence="4" ref="2">
    <original>F</original>
    <variation>C</variation>
    <location>
        <position position="311"/>
    </location>
</feature>
<accession>Q8RVH5</accession>
<name>7SBG2_SOYBN</name>
<evidence type="ECO:0000250" key="1"/>
<evidence type="ECO:0000255" key="2">
    <source>
        <dbReference type="PROSITE-ProRule" id="PRU01103"/>
    </source>
</evidence>
<evidence type="ECO:0000269" key="3">
    <source>
    </source>
</evidence>
<evidence type="ECO:0000305" key="4"/>
<dbReference type="EMBL" id="AB084260">
    <property type="protein sequence ID" value="BAB91077.1"/>
    <property type="molecule type" value="mRNA"/>
</dbReference>
<dbReference type="RefSeq" id="NP_001237167.1">
    <property type="nucleotide sequence ID" value="NM_001250238.1"/>
</dbReference>
<dbReference type="SMR" id="Q8RVH5"/>
<dbReference type="STRING" id="3847.Q8RVH5"/>
<dbReference type="PaxDb" id="3847-GLYMA19G42490.1"/>
<dbReference type="EnsemblPlants" id="KRG96855">
    <property type="protein sequence ID" value="KRG96855"/>
    <property type="gene ID" value="GLYMA_19G236600"/>
</dbReference>
<dbReference type="GeneID" id="547485"/>
<dbReference type="Gramene" id="KRG96855">
    <property type="protein sequence ID" value="KRG96855"/>
    <property type="gene ID" value="GLYMA_19G236600"/>
</dbReference>
<dbReference type="KEGG" id="gmx:547485"/>
<dbReference type="eggNOG" id="KOG1339">
    <property type="taxonomic scope" value="Eukaryota"/>
</dbReference>
<dbReference type="HOGENOM" id="CLU_032185_0_0_1"/>
<dbReference type="InParanoid" id="Q8RVH5"/>
<dbReference type="OrthoDB" id="1258937at2759"/>
<dbReference type="Proteomes" id="UP000008827">
    <property type="component" value="Chromosome 19"/>
</dbReference>
<dbReference type="GO" id="GO:0004190">
    <property type="term" value="F:aspartic-type endopeptidase activity"/>
    <property type="evidence" value="ECO:0007669"/>
    <property type="project" value="InterPro"/>
</dbReference>
<dbReference type="GO" id="GO:0045735">
    <property type="term" value="F:nutrient reservoir activity"/>
    <property type="evidence" value="ECO:0007669"/>
    <property type="project" value="UniProtKB-KW"/>
</dbReference>
<dbReference type="GO" id="GO:0006508">
    <property type="term" value="P:proteolysis"/>
    <property type="evidence" value="ECO:0007669"/>
    <property type="project" value="InterPro"/>
</dbReference>
<dbReference type="CDD" id="cd05489">
    <property type="entry name" value="xylanase_inhibitor_I_like"/>
    <property type="match status" value="1"/>
</dbReference>
<dbReference type="FunFam" id="2.40.70.10:FF:000045">
    <property type="entry name" value="Basic 7S globulin"/>
    <property type="match status" value="1"/>
</dbReference>
<dbReference type="FunFam" id="2.40.70.10:FF:000126">
    <property type="entry name" value="Gamma conglutin 1"/>
    <property type="match status" value="1"/>
</dbReference>
<dbReference type="Gene3D" id="2.40.70.10">
    <property type="entry name" value="Acid Proteases"/>
    <property type="match status" value="2"/>
</dbReference>
<dbReference type="InterPro" id="IPR001461">
    <property type="entry name" value="Aspartic_peptidase_A1"/>
</dbReference>
<dbReference type="InterPro" id="IPR033121">
    <property type="entry name" value="PEPTIDASE_A1"/>
</dbReference>
<dbReference type="InterPro" id="IPR021109">
    <property type="entry name" value="Peptidase_aspartic_dom_sf"/>
</dbReference>
<dbReference type="InterPro" id="IPR032799">
    <property type="entry name" value="TAXi_C"/>
</dbReference>
<dbReference type="InterPro" id="IPR032861">
    <property type="entry name" value="TAXi_N"/>
</dbReference>
<dbReference type="InterPro" id="IPR033868">
    <property type="entry name" value="Xylanase_inhibitor_I-like"/>
</dbReference>
<dbReference type="PANTHER" id="PTHR47965">
    <property type="entry name" value="ASPARTYL PROTEASE-RELATED"/>
    <property type="match status" value="1"/>
</dbReference>
<dbReference type="PANTHER" id="PTHR47965:SF28">
    <property type="entry name" value="BASIC 7S GLOBULIN"/>
    <property type="match status" value="1"/>
</dbReference>
<dbReference type="Pfam" id="PF14541">
    <property type="entry name" value="TAXi_C"/>
    <property type="match status" value="1"/>
</dbReference>
<dbReference type="Pfam" id="PF14543">
    <property type="entry name" value="TAXi_N"/>
    <property type="match status" value="1"/>
</dbReference>
<dbReference type="SUPFAM" id="SSF50630">
    <property type="entry name" value="Acid proteases"/>
    <property type="match status" value="1"/>
</dbReference>
<dbReference type="PROSITE" id="PS51767">
    <property type="entry name" value="PEPTIDASE_A1"/>
    <property type="match status" value="1"/>
</dbReference>